<gene>
    <name evidence="1" type="primary">hisA</name>
    <name type="ordered locus">BCI_0400</name>
</gene>
<protein>
    <recommendedName>
        <fullName evidence="1">1-(5-phosphoribosyl)-5-[(5-phosphoribosylamino)methylideneamino] imidazole-4-carboxamide isomerase</fullName>
        <ecNumber evidence="1">5.3.1.16</ecNumber>
    </recommendedName>
    <alternativeName>
        <fullName evidence="1">Phosphoribosylformimino-5-aminoimidazole carboxamide ribotide isomerase</fullName>
    </alternativeName>
</protein>
<feature type="chain" id="PRO_0000290451" description="1-(5-phosphoribosyl)-5-[(5-phosphoribosylamino)methylideneamino] imidazole-4-carboxamide isomerase">
    <location>
        <begin position="1"/>
        <end position="248"/>
    </location>
</feature>
<feature type="active site" description="Proton acceptor" evidence="1">
    <location>
        <position position="7"/>
    </location>
</feature>
<feature type="active site" description="Proton donor" evidence="1">
    <location>
        <position position="131"/>
    </location>
</feature>
<dbReference type="EC" id="5.3.1.16" evidence="1"/>
<dbReference type="EMBL" id="CP000238">
    <property type="protein sequence ID" value="ABF13964.1"/>
    <property type="molecule type" value="Genomic_DNA"/>
</dbReference>
<dbReference type="RefSeq" id="WP_011520576.1">
    <property type="nucleotide sequence ID" value="NC_007984.1"/>
</dbReference>
<dbReference type="SMR" id="Q1LT71"/>
<dbReference type="STRING" id="374463.BCI_0400"/>
<dbReference type="KEGG" id="bci:BCI_0400"/>
<dbReference type="HOGENOM" id="CLU_048577_1_2_6"/>
<dbReference type="OrthoDB" id="9807749at2"/>
<dbReference type="UniPathway" id="UPA00031">
    <property type="reaction ID" value="UER00009"/>
</dbReference>
<dbReference type="Proteomes" id="UP000002427">
    <property type="component" value="Chromosome"/>
</dbReference>
<dbReference type="GO" id="GO:0005737">
    <property type="term" value="C:cytoplasm"/>
    <property type="evidence" value="ECO:0007669"/>
    <property type="project" value="UniProtKB-SubCell"/>
</dbReference>
<dbReference type="GO" id="GO:0003949">
    <property type="term" value="F:1-(5-phosphoribosyl)-5-[(5-phosphoribosylamino)methylideneamino]imidazole-4-carboxamide isomerase activity"/>
    <property type="evidence" value="ECO:0007669"/>
    <property type="project" value="UniProtKB-UniRule"/>
</dbReference>
<dbReference type="GO" id="GO:0000105">
    <property type="term" value="P:L-histidine biosynthetic process"/>
    <property type="evidence" value="ECO:0007669"/>
    <property type="project" value="UniProtKB-UniRule"/>
</dbReference>
<dbReference type="GO" id="GO:0000162">
    <property type="term" value="P:L-tryptophan biosynthetic process"/>
    <property type="evidence" value="ECO:0007669"/>
    <property type="project" value="TreeGrafter"/>
</dbReference>
<dbReference type="CDD" id="cd04732">
    <property type="entry name" value="HisA"/>
    <property type="match status" value="1"/>
</dbReference>
<dbReference type="FunFam" id="3.20.20.70:FF:000009">
    <property type="entry name" value="1-(5-phosphoribosyl)-5-[(5-phosphoribosylamino)methylideneamino] imidazole-4-carboxamide isomerase"/>
    <property type="match status" value="1"/>
</dbReference>
<dbReference type="Gene3D" id="3.20.20.70">
    <property type="entry name" value="Aldolase class I"/>
    <property type="match status" value="1"/>
</dbReference>
<dbReference type="HAMAP" id="MF_01014">
    <property type="entry name" value="HisA"/>
    <property type="match status" value="1"/>
</dbReference>
<dbReference type="InterPro" id="IPR013785">
    <property type="entry name" value="Aldolase_TIM"/>
</dbReference>
<dbReference type="InterPro" id="IPR006062">
    <property type="entry name" value="His_biosynth"/>
</dbReference>
<dbReference type="InterPro" id="IPR006063">
    <property type="entry name" value="HisA_bact_arch"/>
</dbReference>
<dbReference type="InterPro" id="IPR044524">
    <property type="entry name" value="Isoase_HisA-like"/>
</dbReference>
<dbReference type="InterPro" id="IPR023016">
    <property type="entry name" value="Isoase_HisA-like_bact"/>
</dbReference>
<dbReference type="InterPro" id="IPR011060">
    <property type="entry name" value="RibuloseP-bd_barrel"/>
</dbReference>
<dbReference type="NCBIfam" id="TIGR00007">
    <property type="entry name" value="1-(5-phosphoribosyl)-5-[(5-phosphoribosylamino)methylideneamino]imidazole-4-carboxamide isomerase"/>
    <property type="match status" value="1"/>
</dbReference>
<dbReference type="PANTHER" id="PTHR43090">
    <property type="entry name" value="1-(5-PHOSPHORIBOSYL)-5-[(5-PHOSPHORIBOSYLAMINO)METHYLIDENEAMINO] IMIDAZOLE-4-CARBOXAMIDE ISOMERASE"/>
    <property type="match status" value="1"/>
</dbReference>
<dbReference type="PANTHER" id="PTHR43090:SF2">
    <property type="entry name" value="1-(5-PHOSPHORIBOSYL)-5-[(5-PHOSPHORIBOSYLAMINO)METHYLIDENEAMINO] IMIDAZOLE-4-CARBOXAMIDE ISOMERASE"/>
    <property type="match status" value="1"/>
</dbReference>
<dbReference type="Pfam" id="PF00977">
    <property type="entry name" value="His_biosynth"/>
    <property type="match status" value="1"/>
</dbReference>
<dbReference type="SUPFAM" id="SSF51366">
    <property type="entry name" value="Ribulose-phoshate binding barrel"/>
    <property type="match status" value="1"/>
</dbReference>
<evidence type="ECO:0000255" key="1">
    <source>
        <dbReference type="HAMAP-Rule" id="MF_01014"/>
    </source>
</evidence>
<proteinExistence type="inferred from homology"/>
<organism>
    <name type="scientific">Baumannia cicadellinicola subsp. Homalodisca coagulata</name>
    <dbReference type="NCBI Taxonomy" id="374463"/>
    <lineage>
        <taxon>Bacteria</taxon>
        <taxon>Pseudomonadati</taxon>
        <taxon>Pseudomonadota</taxon>
        <taxon>Gammaproteobacteria</taxon>
        <taxon>Candidatus Palibaumannia</taxon>
    </lineage>
</organism>
<keyword id="KW-0028">Amino-acid biosynthesis</keyword>
<keyword id="KW-0963">Cytoplasm</keyword>
<keyword id="KW-0368">Histidine biosynthesis</keyword>
<keyword id="KW-0413">Isomerase</keyword>
<keyword id="KW-1185">Reference proteome</keyword>
<comment type="catalytic activity">
    <reaction evidence="1">
        <text>1-(5-phospho-beta-D-ribosyl)-5-[(5-phospho-beta-D-ribosylamino)methylideneamino]imidazole-4-carboxamide = 5-[(5-phospho-1-deoxy-D-ribulos-1-ylimino)methylamino]-1-(5-phospho-beta-D-ribosyl)imidazole-4-carboxamide</text>
        <dbReference type="Rhea" id="RHEA:15469"/>
        <dbReference type="ChEBI" id="CHEBI:58435"/>
        <dbReference type="ChEBI" id="CHEBI:58525"/>
        <dbReference type="EC" id="5.3.1.16"/>
    </reaction>
</comment>
<comment type="pathway">
    <text evidence="1">Amino-acid biosynthesis; L-histidine biosynthesis; L-histidine from 5-phospho-alpha-D-ribose 1-diphosphate: step 4/9.</text>
</comment>
<comment type="subcellular location">
    <subcellularLocation>
        <location evidence="1">Cytoplasm</location>
    </subcellularLocation>
</comment>
<comment type="similarity">
    <text evidence="1">Belongs to the HisA/HisF family.</text>
</comment>
<sequence>MIIPALDLINSTVVRLHQGNYQQQRCYSDDPLYYLHNYLRQGAEMLHLVDLTGARDPSARQIKLLTSLLASVKGRTLVQVGGGIRNAADIEVMLQAGAHRVVIGSTAVKKPLEVQQWFKRFGPEALVLALDIRIDTNGKHWVAVSGWMENSGVLLEQVIDQYTQQVELKNILCTDISRDGTLSGMNIELYRLLCGNWPSIAFQSSGGIGSLTDIIKLRNIGVKGVIIGRALLEEKFTLAEAIACWQKE</sequence>
<accession>Q1LT71</accession>
<name>HIS4_BAUCH</name>
<reference key="1">
    <citation type="journal article" date="2006" name="PLoS Biol.">
        <title>Metabolic complementarity and genomics of the dual bacterial symbiosis of sharpshooters.</title>
        <authorList>
            <person name="Wu D."/>
            <person name="Daugherty S.C."/>
            <person name="Van Aken S.E."/>
            <person name="Pai G.H."/>
            <person name="Watkins K.L."/>
            <person name="Khouri H."/>
            <person name="Tallon L.J."/>
            <person name="Zaborsky J.M."/>
            <person name="Dunbar H.E."/>
            <person name="Tran P.L."/>
            <person name="Moran N.A."/>
            <person name="Eisen J.A."/>
        </authorList>
    </citation>
    <scope>NUCLEOTIDE SEQUENCE [LARGE SCALE GENOMIC DNA]</scope>
</reference>